<evidence type="ECO:0000255" key="1">
    <source>
        <dbReference type="HAMAP-Rule" id="MF_00375"/>
    </source>
</evidence>
<sequence length="436" mass="45715">MADSRNASLFERARRSIPGGVNSPVRAFRAVGGTPRFIARADGAYLWDADGKRYIDYIGSWGPMILGHGHPAVLEAVQKAATEGFSFGAPTEREVELAEEILKLVPSAEQVRLVSSGTEAAMSALRLARGATGRSKIVKFEGCYHGHADALLVKAGSGLATFGHPTSAGVPTEVVQHTLVLTYNDVTGLEAAFSAHGAEIACVMIEPIAGNMNFVRAGLPFMKRLRELCTQHGALLVFDEVMTGFRVALGGAQSLYAKAIPGFKPDLSVFGKVIGGGMPLAAFAGPRAIMEQLAPLGPVYQAGTLSGNPVATACGLATLREIQKPGFFESLAAGTRDLLDGLLHAATAAGVPMVGDCEGGMFGFFFPKTAQAALPQNYVEVMATDGERFNRYFHGMLDRGVYLAPALYEAGFVSAAHTPADIEATLAAARATLAAA</sequence>
<accession>A2SKQ7</accession>
<name>GSA_METPP</name>
<organism>
    <name type="scientific">Methylibium petroleiphilum (strain ATCC BAA-1232 / LMG 22953 / PM1)</name>
    <dbReference type="NCBI Taxonomy" id="420662"/>
    <lineage>
        <taxon>Bacteria</taxon>
        <taxon>Pseudomonadati</taxon>
        <taxon>Pseudomonadota</taxon>
        <taxon>Betaproteobacteria</taxon>
        <taxon>Burkholderiales</taxon>
        <taxon>Sphaerotilaceae</taxon>
        <taxon>Methylibium</taxon>
    </lineage>
</organism>
<comment type="catalytic activity">
    <reaction evidence="1">
        <text>(S)-4-amino-5-oxopentanoate = 5-aminolevulinate</text>
        <dbReference type="Rhea" id="RHEA:14265"/>
        <dbReference type="ChEBI" id="CHEBI:57501"/>
        <dbReference type="ChEBI" id="CHEBI:356416"/>
        <dbReference type="EC" id="5.4.3.8"/>
    </reaction>
</comment>
<comment type="cofactor">
    <cofactor evidence="1">
        <name>pyridoxal 5'-phosphate</name>
        <dbReference type="ChEBI" id="CHEBI:597326"/>
    </cofactor>
</comment>
<comment type="pathway">
    <text evidence="1">Porphyrin-containing compound metabolism; protoporphyrin-IX biosynthesis; 5-aminolevulinate from L-glutamyl-tRNA(Glu): step 2/2.</text>
</comment>
<comment type="pathway">
    <text evidence="1">Porphyrin-containing compound metabolism; chlorophyll biosynthesis.</text>
</comment>
<comment type="subunit">
    <text evidence="1">Homodimer.</text>
</comment>
<comment type="subcellular location">
    <subcellularLocation>
        <location evidence="1">Cytoplasm</location>
    </subcellularLocation>
</comment>
<comment type="similarity">
    <text evidence="1">Belongs to the class-III pyridoxal-phosphate-dependent aminotransferase family. HemL subfamily.</text>
</comment>
<protein>
    <recommendedName>
        <fullName evidence="1">Glutamate-1-semialdehyde 2,1-aminomutase</fullName>
        <shortName evidence="1">GSA</shortName>
        <ecNumber evidence="1">5.4.3.8</ecNumber>
    </recommendedName>
    <alternativeName>
        <fullName evidence="1">Glutamate-1-semialdehyde aminotransferase</fullName>
        <shortName evidence="1">GSA-AT</shortName>
    </alternativeName>
</protein>
<keyword id="KW-0149">Chlorophyll biosynthesis</keyword>
<keyword id="KW-0963">Cytoplasm</keyword>
<keyword id="KW-0413">Isomerase</keyword>
<keyword id="KW-0627">Porphyrin biosynthesis</keyword>
<keyword id="KW-0663">Pyridoxal phosphate</keyword>
<keyword id="KW-1185">Reference proteome</keyword>
<dbReference type="EC" id="5.4.3.8" evidence="1"/>
<dbReference type="EMBL" id="CP000555">
    <property type="protein sequence ID" value="ABM96146.1"/>
    <property type="molecule type" value="Genomic_DNA"/>
</dbReference>
<dbReference type="RefSeq" id="WP_011830769.1">
    <property type="nucleotide sequence ID" value="NC_008825.1"/>
</dbReference>
<dbReference type="SMR" id="A2SKQ7"/>
<dbReference type="STRING" id="420662.Mpe_A3193"/>
<dbReference type="KEGG" id="mpt:Mpe_A3193"/>
<dbReference type="eggNOG" id="COG0001">
    <property type="taxonomic scope" value="Bacteria"/>
</dbReference>
<dbReference type="HOGENOM" id="CLU_016922_1_5_4"/>
<dbReference type="UniPathway" id="UPA00251">
    <property type="reaction ID" value="UER00317"/>
</dbReference>
<dbReference type="UniPathway" id="UPA00668"/>
<dbReference type="Proteomes" id="UP000000366">
    <property type="component" value="Chromosome"/>
</dbReference>
<dbReference type="GO" id="GO:0005737">
    <property type="term" value="C:cytoplasm"/>
    <property type="evidence" value="ECO:0007669"/>
    <property type="project" value="UniProtKB-SubCell"/>
</dbReference>
<dbReference type="GO" id="GO:0042286">
    <property type="term" value="F:glutamate-1-semialdehyde 2,1-aminomutase activity"/>
    <property type="evidence" value="ECO:0007669"/>
    <property type="project" value="UniProtKB-UniRule"/>
</dbReference>
<dbReference type="GO" id="GO:0030170">
    <property type="term" value="F:pyridoxal phosphate binding"/>
    <property type="evidence" value="ECO:0007669"/>
    <property type="project" value="InterPro"/>
</dbReference>
<dbReference type="GO" id="GO:0008483">
    <property type="term" value="F:transaminase activity"/>
    <property type="evidence" value="ECO:0007669"/>
    <property type="project" value="InterPro"/>
</dbReference>
<dbReference type="GO" id="GO:0015995">
    <property type="term" value="P:chlorophyll biosynthetic process"/>
    <property type="evidence" value="ECO:0007669"/>
    <property type="project" value="UniProtKB-UniRule"/>
</dbReference>
<dbReference type="GO" id="GO:0006782">
    <property type="term" value="P:protoporphyrinogen IX biosynthetic process"/>
    <property type="evidence" value="ECO:0007669"/>
    <property type="project" value="UniProtKB-UniRule"/>
</dbReference>
<dbReference type="CDD" id="cd00610">
    <property type="entry name" value="OAT_like"/>
    <property type="match status" value="1"/>
</dbReference>
<dbReference type="FunFam" id="3.40.640.10:FF:000021">
    <property type="entry name" value="Glutamate-1-semialdehyde 2,1-aminomutase"/>
    <property type="match status" value="1"/>
</dbReference>
<dbReference type="Gene3D" id="3.90.1150.10">
    <property type="entry name" value="Aspartate Aminotransferase, domain 1"/>
    <property type="match status" value="1"/>
</dbReference>
<dbReference type="Gene3D" id="3.40.640.10">
    <property type="entry name" value="Type I PLP-dependent aspartate aminotransferase-like (Major domain)"/>
    <property type="match status" value="1"/>
</dbReference>
<dbReference type="HAMAP" id="MF_00375">
    <property type="entry name" value="HemL_aminotrans_3"/>
    <property type="match status" value="1"/>
</dbReference>
<dbReference type="InterPro" id="IPR004639">
    <property type="entry name" value="4pyrrol_synth_GluAld_NH2Trfase"/>
</dbReference>
<dbReference type="InterPro" id="IPR005814">
    <property type="entry name" value="Aminotrans_3"/>
</dbReference>
<dbReference type="InterPro" id="IPR015424">
    <property type="entry name" value="PyrdxlP-dep_Trfase"/>
</dbReference>
<dbReference type="InterPro" id="IPR015421">
    <property type="entry name" value="PyrdxlP-dep_Trfase_major"/>
</dbReference>
<dbReference type="InterPro" id="IPR015422">
    <property type="entry name" value="PyrdxlP-dep_Trfase_small"/>
</dbReference>
<dbReference type="NCBIfam" id="TIGR00713">
    <property type="entry name" value="hemL"/>
    <property type="match status" value="1"/>
</dbReference>
<dbReference type="NCBIfam" id="NF000818">
    <property type="entry name" value="PRK00062.1"/>
    <property type="match status" value="1"/>
</dbReference>
<dbReference type="PANTHER" id="PTHR43713">
    <property type="entry name" value="GLUTAMATE-1-SEMIALDEHYDE 2,1-AMINOMUTASE"/>
    <property type="match status" value="1"/>
</dbReference>
<dbReference type="PANTHER" id="PTHR43713:SF3">
    <property type="entry name" value="GLUTAMATE-1-SEMIALDEHYDE 2,1-AMINOMUTASE 1, CHLOROPLASTIC-RELATED"/>
    <property type="match status" value="1"/>
</dbReference>
<dbReference type="Pfam" id="PF00202">
    <property type="entry name" value="Aminotran_3"/>
    <property type="match status" value="1"/>
</dbReference>
<dbReference type="SUPFAM" id="SSF53383">
    <property type="entry name" value="PLP-dependent transferases"/>
    <property type="match status" value="1"/>
</dbReference>
<feature type="chain" id="PRO_0000382343" description="Glutamate-1-semialdehyde 2,1-aminomutase">
    <location>
        <begin position="1"/>
        <end position="436"/>
    </location>
</feature>
<feature type="modified residue" description="N6-(pyridoxal phosphate)lysine" evidence="1">
    <location>
        <position position="272"/>
    </location>
</feature>
<reference key="1">
    <citation type="journal article" date="2007" name="J. Bacteriol.">
        <title>Whole-genome analysis of the methyl tert-butyl ether-degrading beta-proteobacterium Methylibium petroleiphilum PM1.</title>
        <authorList>
            <person name="Kane S.R."/>
            <person name="Chakicherla A.Y."/>
            <person name="Chain P.S.G."/>
            <person name="Schmidt R."/>
            <person name="Shin M.W."/>
            <person name="Legler T.C."/>
            <person name="Scow K.M."/>
            <person name="Larimer F.W."/>
            <person name="Lucas S.M."/>
            <person name="Richardson P.M."/>
            <person name="Hristova K.R."/>
        </authorList>
    </citation>
    <scope>NUCLEOTIDE SEQUENCE [LARGE SCALE GENOMIC DNA]</scope>
    <source>
        <strain>ATCC BAA-1232 / LMG 22953 / PM1</strain>
    </source>
</reference>
<proteinExistence type="inferred from homology"/>
<gene>
    <name evidence="1" type="primary">hemL</name>
    <name type="ordered locus">Mpe_A3193</name>
</gene>